<organism>
    <name type="scientific">Mycobacterium bovis (strain ATCC BAA-935 / AF2122/97)</name>
    <dbReference type="NCBI Taxonomy" id="233413"/>
    <lineage>
        <taxon>Bacteria</taxon>
        <taxon>Bacillati</taxon>
        <taxon>Actinomycetota</taxon>
        <taxon>Actinomycetes</taxon>
        <taxon>Mycobacteriales</taxon>
        <taxon>Mycobacteriaceae</taxon>
        <taxon>Mycobacterium</taxon>
        <taxon>Mycobacterium tuberculosis complex</taxon>
    </lineage>
</organism>
<proteinExistence type="inferred from homology"/>
<name>MMPS1_MYCBO</name>
<comment type="subcellular location">
    <subcellularLocation>
        <location evidence="2">Cell membrane</location>
        <topology evidence="1">Multi-pass membrane protein</topology>
    </subcellularLocation>
</comment>
<comment type="similarity">
    <text evidence="2">Belongs to the MmpS family.</text>
</comment>
<feature type="chain" id="PRO_0000216150" description="Probable transport accessory protein MmpS1">
    <location>
        <begin position="1"/>
        <end position="142"/>
    </location>
</feature>
<feature type="transmembrane region" description="Helical" evidence="1">
    <location>
        <begin position="8"/>
        <end position="28"/>
    </location>
</feature>
<feature type="transmembrane region" description="Helical" evidence="1">
    <location>
        <begin position="81"/>
        <end position="101"/>
    </location>
</feature>
<protein>
    <recommendedName>
        <fullName evidence="2">Probable transport accessory protein MmpS1</fullName>
    </recommendedName>
</protein>
<gene>
    <name type="primary">mmpS1</name>
    <name type="ordered locus">BQ2027_MB0410C</name>
</gene>
<sequence>MFGVAKRFWIPMVIVIVVAVAAVTVSRLHSVFGSHQHAPDTGNLDPIIAFYPKHVLYEVFGPPGTVASINYLDADAQPHEVVNAAVPWSFTIVTTLTAVVANVVARGDGASLGCRITVNEVIREERIVNAYHAHTSCLVKSA</sequence>
<reference key="1">
    <citation type="journal article" date="2003" name="Proc. Natl. Acad. Sci. U.S.A.">
        <title>The complete genome sequence of Mycobacterium bovis.</title>
        <authorList>
            <person name="Garnier T."/>
            <person name="Eiglmeier K."/>
            <person name="Camus J.-C."/>
            <person name="Medina N."/>
            <person name="Mansoor H."/>
            <person name="Pryor M."/>
            <person name="Duthoy S."/>
            <person name="Grondin S."/>
            <person name="Lacroix C."/>
            <person name="Monsempe C."/>
            <person name="Simon S."/>
            <person name="Harris B."/>
            <person name="Atkin R."/>
            <person name="Doggett J."/>
            <person name="Mayes R."/>
            <person name="Keating L."/>
            <person name="Wheeler P.R."/>
            <person name="Parkhill J."/>
            <person name="Barrell B.G."/>
            <person name="Cole S.T."/>
            <person name="Gordon S.V."/>
            <person name="Hewinson R.G."/>
        </authorList>
    </citation>
    <scope>NUCLEOTIDE SEQUENCE [LARGE SCALE GENOMIC DNA]</scope>
    <source>
        <strain>ATCC BAA-935 / AF2122/97</strain>
    </source>
</reference>
<reference key="2">
    <citation type="journal article" date="2017" name="Genome Announc.">
        <title>Updated reference genome sequence and annotation of Mycobacterium bovis AF2122/97.</title>
        <authorList>
            <person name="Malone K.M."/>
            <person name="Farrell D."/>
            <person name="Stuber T.P."/>
            <person name="Schubert O.T."/>
            <person name="Aebersold R."/>
            <person name="Robbe-Austerman S."/>
            <person name="Gordon S.V."/>
        </authorList>
    </citation>
    <scope>NUCLEOTIDE SEQUENCE [LARGE SCALE GENOMIC DNA]</scope>
    <scope>GENOME REANNOTATION</scope>
    <source>
        <strain>ATCC BAA-935 / AF2122/97</strain>
    </source>
</reference>
<dbReference type="EMBL" id="LT708304">
    <property type="protein sequence ID" value="SIT98984.1"/>
    <property type="molecule type" value="Genomic_DNA"/>
</dbReference>
<dbReference type="RefSeq" id="NP_854073.1">
    <property type="nucleotide sequence ID" value="NC_002945.3"/>
</dbReference>
<dbReference type="RefSeq" id="WP_003402074.1">
    <property type="nucleotide sequence ID" value="NC_002945.4"/>
</dbReference>
<dbReference type="SMR" id="P0A5K1"/>
<dbReference type="PATRIC" id="fig|233413.5.peg.447"/>
<dbReference type="Proteomes" id="UP000001419">
    <property type="component" value="Chromosome"/>
</dbReference>
<dbReference type="GO" id="GO:0005886">
    <property type="term" value="C:plasma membrane"/>
    <property type="evidence" value="ECO:0007669"/>
    <property type="project" value="UniProtKB-SubCell"/>
</dbReference>
<dbReference type="Gene3D" id="2.60.40.2880">
    <property type="entry name" value="MmpS1-5, C-terminal soluble domain"/>
    <property type="match status" value="1"/>
</dbReference>
<dbReference type="InterPro" id="IPR008693">
    <property type="entry name" value="MmpS"/>
</dbReference>
<dbReference type="InterPro" id="IPR038468">
    <property type="entry name" value="MmpS_C"/>
</dbReference>
<dbReference type="Pfam" id="PF05423">
    <property type="entry name" value="Mycobact_memb"/>
    <property type="match status" value="1"/>
</dbReference>
<evidence type="ECO:0000255" key="1"/>
<evidence type="ECO:0000305" key="2"/>
<keyword id="KW-1003">Cell membrane</keyword>
<keyword id="KW-0472">Membrane</keyword>
<keyword id="KW-1185">Reference proteome</keyword>
<keyword id="KW-0812">Transmembrane</keyword>
<keyword id="KW-1133">Transmembrane helix</keyword>
<accession>P0A5K1</accession>
<accession>A0A1R3XVF1</accession>
<accession>P95212</accession>
<accession>X2BEY5</accession>